<evidence type="ECO:0000255" key="1">
    <source>
        <dbReference type="HAMAP-Rule" id="MF_01953"/>
    </source>
</evidence>
<reference key="1">
    <citation type="journal article" date="1990" name="FEMS Microbiol. Lett.">
        <title>Cloning of the genes encoding urease from Proteus vulgaris and sequencing of the structural genes.</title>
        <authorList>
            <person name="Moersdorf G."/>
            <person name="Kaltwasser H."/>
        </authorList>
    </citation>
    <scope>NUCLEOTIDE SEQUENCE [GENOMIC DNA]</scope>
    <source>
        <strain>ATCC 13315 / DSM 30118 / JCM 1668 / NBRC 3851 / NCIMB 4175 / NCTC 4175 / NRRL B-3405</strain>
    </source>
</reference>
<accession>P16122</accession>
<comment type="catalytic activity">
    <reaction evidence="1">
        <text>urea + 2 H2O + H(+) = hydrogencarbonate + 2 NH4(+)</text>
        <dbReference type="Rhea" id="RHEA:20557"/>
        <dbReference type="ChEBI" id="CHEBI:15377"/>
        <dbReference type="ChEBI" id="CHEBI:15378"/>
        <dbReference type="ChEBI" id="CHEBI:16199"/>
        <dbReference type="ChEBI" id="CHEBI:17544"/>
        <dbReference type="ChEBI" id="CHEBI:28938"/>
        <dbReference type="EC" id="3.5.1.5"/>
    </reaction>
</comment>
<comment type="cofactor">
    <cofactor evidence="1">
        <name>Ni cation</name>
        <dbReference type="ChEBI" id="CHEBI:25516"/>
    </cofactor>
    <text evidence="1">Binds 2 nickel ions per subunit.</text>
</comment>
<comment type="pathway">
    <text evidence="1">Nitrogen metabolism; urea degradation; CO(2) and NH(3) from urea (urease route): step 1/1.</text>
</comment>
<comment type="subunit">
    <text evidence="1">Heterotrimer of UreA (gamma), UreB (beta) and UreC (alpha) subunits. Three heterotrimers associate to form the active enzyme.</text>
</comment>
<comment type="subcellular location">
    <subcellularLocation>
        <location evidence="1">Cytoplasm</location>
    </subcellularLocation>
</comment>
<comment type="PTM">
    <text evidence="1">Carboxylation allows a single lysine to coordinate two nickel ions.</text>
</comment>
<comment type="similarity">
    <text evidence="1">Belongs to the metallo-dependent hydrolases superfamily. Urease alpha subunit family.</text>
</comment>
<name>URE1_PROHU</name>
<gene>
    <name evidence="1" type="primary">ureC</name>
</gene>
<feature type="chain" id="PRO_0000067546" description="Urease subunit alpha">
    <location>
        <begin position="1"/>
        <end position="567"/>
    </location>
</feature>
<feature type="domain" description="Urease" evidence="1">
    <location>
        <begin position="129"/>
        <end position="567"/>
    </location>
</feature>
<feature type="active site" description="Proton donor" evidence="1">
    <location>
        <position position="320"/>
    </location>
</feature>
<feature type="binding site" evidence="1">
    <location>
        <position position="134"/>
    </location>
    <ligand>
        <name>Ni(2+)</name>
        <dbReference type="ChEBI" id="CHEBI:49786"/>
        <label>1</label>
    </ligand>
</feature>
<feature type="binding site" evidence="1">
    <location>
        <position position="136"/>
    </location>
    <ligand>
        <name>Ni(2+)</name>
        <dbReference type="ChEBI" id="CHEBI:49786"/>
        <label>1</label>
    </ligand>
</feature>
<feature type="binding site" description="via carbamate group" evidence="1">
    <location>
        <position position="217"/>
    </location>
    <ligand>
        <name>Ni(2+)</name>
        <dbReference type="ChEBI" id="CHEBI:49786"/>
        <label>1</label>
    </ligand>
</feature>
<feature type="binding site" description="via carbamate group" evidence="1">
    <location>
        <position position="217"/>
    </location>
    <ligand>
        <name>Ni(2+)</name>
        <dbReference type="ChEBI" id="CHEBI:49786"/>
        <label>2</label>
    </ligand>
</feature>
<feature type="binding site" evidence="1">
    <location>
        <position position="219"/>
    </location>
    <ligand>
        <name>substrate</name>
    </ligand>
</feature>
<feature type="binding site" evidence="1">
    <location>
        <position position="246"/>
    </location>
    <ligand>
        <name>Ni(2+)</name>
        <dbReference type="ChEBI" id="CHEBI:49786"/>
        <label>2</label>
    </ligand>
</feature>
<feature type="binding site" evidence="1">
    <location>
        <position position="272"/>
    </location>
    <ligand>
        <name>Ni(2+)</name>
        <dbReference type="ChEBI" id="CHEBI:49786"/>
        <label>2</label>
    </ligand>
</feature>
<feature type="binding site" evidence="1">
    <location>
        <position position="360"/>
    </location>
    <ligand>
        <name>Ni(2+)</name>
        <dbReference type="ChEBI" id="CHEBI:49786"/>
        <label>1</label>
    </ligand>
</feature>
<feature type="modified residue" description="N6-carboxylysine" evidence="1">
    <location>
        <position position="217"/>
    </location>
</feature>
<dbReference type="EC" id="3.5.1.5" evidence="1"/>
<dbReference type="EMBL" id="X51816">
    <property type="protein sequence ID" value="CAA36115.1"/>
    <property type="molecule type" value="Genomic_DNA"/>
</dbReference>
<dbReference type="PIR" id="S08480">
    <property type="entry name" value="S08480"/>
</dbReference>
<dbReference type="SMR" id="P16122"/>
<dbReference type="STRING" id="1354271.M997_0893"/>
<dbReference type="MEROPS" id="M38.982"/>
<dbReference type="UniPathway" id="UPA00258">
    <property type="reaction ID" value="UER00370"/>
</dbReference>
<dbReference type="GO" id="GO:0005737">
    <property type="term" value="C:cytoplasm"/>
    <property type="evidence" value="ECO:0007669"/>
    <property type="project" value="UniProtKB-SubCell"/>
</dbReference>
<dbReference type="GO" id="GO:0016151">
    <property type="term" value="F:nickel cation binding"/>
    <property type="evidence" value="ECO:0007669"/>
    <property type="project" value="UniProtKB-UniRule"/>
</dbReference>
<dbReference type="GO" id="GO:0009039">
    <property type="term" value="F:urease activity"/>
    <property type="evidence" value="ECO:0007669"/>
    <property type="project" value="UniProtKB-UniRule"/>
</dbReference>
<dbReference type="GO" id="GO:0043419">
    <property type="term" value="P:urea catabolic process"/>
    <property type="evidence" value="ECO:0007669"/>
    <property type="project" value="UniProtKB-UniRule"/>
</dbReference>
<dbReference type="CDD" id="cd00375">
    <property type="entry name" value="Urease_alpha"/>
    <property type="match status" value="1"/>
</dbReference>
<dbReference type="Gene3D" id="3.20.20.140">
    <property type="entry name" value="Metal-dependent hydrolases"/>
    <property type="match status" value="1"/>
</dbReference>
<dbReference type="Gene3D" id="2.30.40.10">
    <property type="entry name" value="Urease, subunit C, domain 1"/>
    <property type="match status" value="1"/>
</dbReference>
<dbReference type="HAMAP" id="MF_01953">
    <property type="entry name" value="Urease_alpha"/>
    <property type="match status" value="1"/>
</dbReference>
<dbReference type="InterPro" id="IPR006680">
    <property type="entry name" value="Amidohydro-rel"/>
</dbReference>
<dbReference type="InterPro" id="IPR011059">
    <property type="entry name" value="Metal-dep_hydrolase_composite"/>
</dbReference>
<dbReference type="InterPro" id="IPR032466">
    <property type="entry name" value="Metal_Hydrolase"/>
</dbReference>
<dbReference type="InterPro" id="IPR011612">
    <property type="entry name" value="Urease_alpha_N_dom"/>
</dbReference>
<dbReference type="InterPro" id="IPR050112">
    <property type="entry name" value="Urease_alpha_subunit"/>
</dbReference>
<dbReference type="InterPro" id="IPR017950">
    <property type="entry name" value="Urease_AS"/>
</dbReference>
<dbReference type="InterPro" id="IPR005848">
    <property type="entry name" value="Urease_asu"/>
</dbReference>
<dbReference type="InterPro" id="IPR017951">
    <property type="entry name" value="Urease_asu_c"/>
</dbReference>
<dbReference type="InterPro" id="IPR029754">
    <property type="entry name" value="Urease_Ni-bd"/>
</dbReference>
<dbReference type="NCBIfam" id="NF009685">
    <property type="entry name" value="PRK13206.1"/>
    <property type="match status" value="1"/>
</dbReference>
<dbReference type="NCBIfam" id="NF009686">
    <property type="entry name" value="PRK13207.1"/>
    <property type="match status" value="1"/>
</dbReference>
<dbReference type="NCBIfam" id="TIGR01792">
    <property type="entry name" value="urease_alph"/>
    <property type="match status" value="1"/>
</dbReference>
<dbReference type="PANTHER" id="PTHR43440">
    <property type="entry name" value="UREASE"/>
    <property type="match status" value="1"/>
</dbReference>
<dbReference type="PANTHER" id="PTHR43440:SF1">
    <property type="entry name" value="UREASE"/>
    <property type="match status" value="1"/>
</dbReference>
<dbReference type="Pfam" id="PF01979">
    <property type="entry name" value="Amidohydro_1"/>
    <property type="match status" value="1"/>
</dbReference>
<dbReference type="Pfam" id="PF00449">
    <property type="entry name" value="Urease_alpha"/>
    <property type="match status" value="1"/>
</dbReference>
<dbReference type="PRINTS" id="PR01752">
    <property type="entry name" value="UREASE"/>
</dbReference>
<dbReference type="SUPFAM" id="SSF51338">
    <property type="entry name" value="Composite domain of metallo-dependent hydrolases"/>
    <property type="match status" value="2"/>
</dbReference>
<dbReference type="SUPFAM" id="SSF51556">
    <property type="entry name" value="Metallo-dependent hydrolases"/>
    <property type="match status" value="1"/>
</dbReference>
<dbReference type="PROSITE" id="PS01120">
    <property type="entry name" value="UREASE_1"/>
    <property type="match status" value="1"/>
</dbReference>
<dbReference type="PROSITE" id="PS00145">
    <property type="entry name" value="UREASE_2"/>
    <property type="match status" value="1"/>
</dbReference>
<dbReference type="PROSITE" id="PS51368">
    <property type="entry name" value="UREASE_3"/>
    <property type="match status" value="1"/>
</dbReference>
<organism>
    <name type="scientific">Proteus hauseri</name>
    <dbReference type="NCBI Taxonomy" id="183417"/>
    <lineage>
        <taxon>Bacteria</taxon>
        <taxon>Pseudomonadati</taxon>
        <taxon>Pseudomonadota</taxon>
        <taxon>Gammaproteobacteria</taxon>
        <taxon>Enterobacterales</taxon>
        <taxon>Morganellaceae</taxon>
        <taxon>Proteus</taxon>
    </lineage>
</organism>
<keyword id="KW-0963">Cytoplasm</keyword>
<keyword id="KW-0378">Hydrolase</keyword>
<keyword id="KW-0479">Metal-binding</keyword>
<keyword id="KW-0533">Nickel</keyword>
<proteinExistence type="inferred from homology"/>
<protein>
    <recommendedName>
        <fullName evidence="1">Urease subunit alpha</fullName>
        <ecNumber evidence="1">3.5.1.5</ecNumber>
    </recommendedName>
    <alternativeName>
        <fullName evidence="1">Urea amidohydrolase subunit alpha</fullName>
    </alternativeName>
</protein>
<sequence>MKTISRQAYADMFGPTTGDRLRLADTELFLEIEQDFTTYGEEVKFGGGKVIRDGMGQSQVVSAECVDVLITNAIIIDHWGIVKADIGIKDGRITGIGKAGNPDVQPNVDIVIGPGTEVVAGEGKIITAGGVDTHIHFICPQQAEEGLISGVTTFIGGGTGPVAGTNATTVTPGIWNMHRMLEAVDELPINVGLFGKGCVSQPEAIREQIEAGAIGLKIHEDWGATPMAIHNCLNVADEMDVQVAIHSDTLNEGGFYEETVKAIAGRVIHVFHTEGAGGGHAPDVIKSVGEPNILPASTNPTMPYTINTVDEHLDMLMVCHHLDPSIPEDVAFAESRIRRETIAAEDILHDMGAISVMSSDSQAMGRVGEVVMRTWQCAHKMKLQRGSLAGDTAENDNNRIKRYIAKYTINPALAHGIAHEVGSIEKGKLADIVLWDPAFFGVKPALIMKGGMVAYAPMGDINAAIPTPQPVHYRPMYACLGKAKYQTSMIFMSKAGIDAGVPEKLGLQSLIGRVEGCRKVTKASMIHNSYVPHIELEPQTYIVKADGVPLVCEPATELPMAQRYFLF</sequence>